<gene>
    <name evidence="1" type="primary">rpsG</name>
    <name type="ordered locus">DMR_12160</name>
</gene>
<feature type="chain" id="PRO_1000206400" description="Small ribosomal subunit protein uS7">
    <location>
        <begin position="1"/>
        <end position="156"/>
    </location>
</feature>
<sequence>MPRKGPVSKRSVLPDPKFGSHLMTKFINRLMHDGKKGVAENLFYQAVEVLAEKSGEDPLKAFEKAIGNVKPHMEVKPRRVGGATYQVPMEVRPERQVTLALRWLINQARARGEKGMADKLSGELLDAYHNRGGAVKKKEDTHRMADANKAFAHYRW</sequence>
<evidence type="ECO:0000255" key="1">
    <source>
        <dbReference type="HAMAP-Rule" id="MF_00480"/>
    </source>
</evidence>
<evidence type="ECO:0000305" key="2"/>
<proteinExistence type="inferred from homology"/>
<accession>C4XLW9</accession>
<protein>
    <recommendedName>
        <fullName evidence="1">Small ribosomal subunit protein uS7</fullName>
    </recommendedName>
    <alternativeName>
        <fullName evidence="2">30S ribosomal protein S7</fullName>
    </alternativeName>
</protein>
<keyword id="KW-0687">Ribonucleoprotein</keyword>
<keyword id="KW-0689">Ribosomal protein</keyword>
<keyword id="KW-0694">RNA-binding</keyword>
<keyword id="KW-0699">rRNA-binding</keyword>
<keyword id="KW-0820">tRNA-binding</keyword>
<dbReference type="EMBL" id="AP010904">
    <property type="protein sequence ID" value="BAH74707.1"/>
    <property type="molecule type" value="Genomic_DNA"/>
</dbReference>
<dbReference type="RefSeq" id="WP_015859929.1">
    <property type="nucleotide sequence ID" value="NC_012796.1"/>
</dbReference>
<dbReference type="SMR" id="C4XLW9"/>
<dbReference type="STRING" id="573370.DMR_12160"/>
<dbReference type="KEGG" id="dma:DMR_12160"/>
<dbReference type="eggNOG" id="COG0049">
    <property type="taxonomic scope" value="Bacteria"/>
</dbReference>
<dbReference type="HOGENOM" id="CLU_072226_1_1_7"/>
<dbReference type="OrthoDB" id="9807653at2"/>
<dbReference type="Proteomes" id="UP000009071">
    <property type="component" value="Chromosome"/>
</dbReference>
<dbReference type="GO" id="GO:0015935">
    <property type="term" value="C:small ribosomal subunit"/>
    <property type="evidence" value="ECO:0007669"/>
    <property type="project" value="InterPro"/>
</dbReference>
<dbReference type="GO" id="GO:0019843">
    <property type="term" value="F:rRNA binding"/>
    <property type="evidence" value="ECO:0007669"/>
    <property type="project" value="UniProtKB-UniRule"/>
</dbReference>
<dbReference type="GO" id="GO:0003735">
    <property type="term" value="F:structural constituent of ribosome"/>
    <property type="evidence" value="ECO:0007669"/>
    <property type="project" value="InterPro"/>
</dbReference>
<dbReference type="GO" id="GO:0000049">
    <property type="term" value="F:tRNA binding"/>
    <property type="evidence" value="ECO:0007669"/>
    <property type="project" value="UniProtKB-UniRule"/>
</dbReference>
<dbReference type="GO" id="GO:0006412">
    <property type="term" value="P:translation"/>
    <property type="evidence" value="ECO:0007669"/>
    <property type="project" value="UniProtKB-UniRule"/>
</dbReference>
<dbReference type="CDD" id="cd14869">
    <property type="entry name" value="uS7_Bacteria"/>
    <property type="match status" value="1"/>
</dbReference>
<dbReference type="FunFam" id="1.10.455.10:FF:000001">
    <property type="entry name" value="30S ribosomal protein S7"/>
    <property type="match status" value="1"/>
</dbReference>
<dbReference type="Gene3D" id="1.10.455.10">
    <property type="entry name" value="Ribosomal protein S7 domain"/>
    <property type="match status" value="1"/>
</dbReference>
<dbReference type="HAMAP" id="MF_00480_B">
    <property type="entry name" value="Ribosomal_uS7_B"/>
    <property type="match status" value="1"/>
</dbReference>
<dbReference type="InterPro" id="IPR000235">
    <property type="entry name" value="Ribosomal_uS7"/>
</dbReference>
<dbReference type="InterPro" id="IPR005717">
    <property type="entry name" value="Ribosomal_uS7_bac/org-type"/>
</dbReference>
<dbReference type="InterPro" id="IPR020606">
    <property type="entry name" value="Ribosomal_uS7_CS"/>
</dbReference>
<dbReference type="InterPro" id="IPR023798">
    <property type="entry name" value="Ribosomal_uS7_dom"/>
</dbReference>
<dbReference type="InterPro" id="IPR036823">
    <property type="entry name" value="Ribosomal_uS7_dom_sf"/>
</dbReference>
<dbReference type="NCBIfam" id="TIGR01029">
    <property type="entry name" value="rpsG_bact"/>
    <property type="match status" value="1"/>
</dbReference>
<dbReference type="PANTHER" id="PTHR11205">
    <property type="entry name" value="RIBOSOMAL PROTEIN S7"/>
    <property type="match status" value="1"/>
</dbReference>
<dbReference type="Pfam" id="PF00177">
    <property type="entry name" value="Ribosomal_S7"/>
    <property type="match status" value="1"/>
</dbReference>
<dbReference type="PIRSF" id="PIRSF002122">
    <property type="entry name" value="RPS7p_RPS7a_RPS5e_RPS7o"/>
    <property type="match status" value="1"/>
</dbReference>
<dbReference type="SUPFAM" id="SSF47973">
    <property type="entry name" value="Ribosomal protein S7"/>
    <property type="match status" value="1"/>
</dbReference>
<dbReference type="PROSITE" id="PS00052">
    <property type="entry name" value="RIBOSOMAL_S7"/>
    <property type="match status" value="1"/>
</dbReference>
<organism>
    <name type="scientific">Solidesulfovibrio magneticus (strain ATCC 700980 / DSM 13731 / RS-1)</name>
    <name type="common">Desulfovibrio magneticus</name>
    <dbReference type="NCBI Taxonomy" id="573370"/>
    <lineage>
        <taxon>Bacteria</taxon>
        <taxon>Pseudomonadati</taxon>
        <taxon>Thermodesulfobacteriota</taxon>
        <taxon>Desulfovibrionia</taxon>
        <taxon>Desulfovibrionales</taxon>
        <taxon>Desulfovibrionaceae</taxon>
        <taxon>Solidesulfovibrio</taxon>
    </lineage>
</organism>
<reference key="1">
    <citation type="journal article" date="2009" name="Genome Res.">
        <title>Whole genome sequence of Desulfovibrio magneticus strain RS-1 revealed common gene clusters in magnetotactic bacteria.</title>
        <authorList>
            <person name="Nakazawa H."/>
            <person name="Arakaki A."/>
            <person name="Narita-Yamada S."/>
            <person name="Yashiro I."/>
            <person name="Jinno K."/>
            <person name="Aoki N."/>
            <person name="Tsuruyama A."/>
            <person name="Okamura Y."/>
            <person name="Tanikawa S."/>
            <person name="Fujita N."/>
            <person name="Takeyama H."/>
            <person name="Matsunaga T."/>
        </authorList>
    </citation>
    <scope>NUCLEOTIDE SEQUENCE [LARGE SCALE GENOMIC DNA]</scope>
    <source>
        <strain>ATCC 700980 / DSM 13731 / RS-1</strain>
    </source>
</reference>
<comment type="function">
    <text evidence="1">One of the primary rRNA binding proteins, it binds directly to 16S rRNA where it nucleates assembly of the head domain of the 30S subunit. Is located at the subunit interface close to the decoding center, probably blocks exit of the E-site tRNA.</text>
</comment>
<comment type="subunit">
    <text evidence="1">Part of the 30S ribosomal subunit. Contacts proteins S9 and S11.</text>
</comment>
<comment type="similarity">
    <text evidence="1">Belongs to the universal ribosomal protein uS7 family.</text>
</comment>
<name>RS7_SOLM1</name>